<reference key="1">
    <citation type="journal article" date="2005" name="PLoS Biol.">
        <title>The genomes of Oryza sativa: a history of duplications.</title>
        <authorList>
            <person name="Yu J."/>
            <person name="Wang J."/>
            <person name="Lin W."/>
            <person name="Li S."/>
            <person name="Li H."/>
            <person name="Zhou J."/>
            <person name="Ni P."/>
            <person name="Dong W."/>
            <person name="Hu S."/>
            <person name="Zeng C."/>
            <person name="Zhang J."/>
            <person name="Zhang Y."/>
            <person name="Li R."/>
            <person name="Xu Z."/>
            <person name="Li S."/>
            <person name="Li X."/>
            <person name="Zheng H."/>
            <person name="Cong L."/>
            <person name="Lin L."/>
            <person name="Yin J."/>
            <person name="Geng J."/>
            <person name="Li G."/>
            <person name="Shi J."/>
            <person name="Liu J."/>
            <person name="Lv H."/>
            <person name="Li J."/>
            <person name="Wang J."/>
            <person name="Deng Y."/>
            <person name="Ran L."/>
            <person name="Shi X."/>
            <person name="Wang X."/>
            <person name="Wu Q."/>
            <person name="Li C."/>
            <person name="Ren X."/>
            <person name="Wang J."/>
            <person name="Wang X."/>
            <person name="Li D."/>
            <person name="Liu D."/>
            <person name="Zhang X."/>
            <person name="Ji Z."/>
            <person name="Zhao W."/>
            <person name="Sun Y."/>
            <person name="Zhang Z."/>
            <person name="Bao J."/>
            <person name="Han Y."/>
            <person name="Dong L."/>
            <person name="Ji J."/>
            <person name="Chen P."/>
            <person name="Wu S."/>
            <person name="Liu J."/>
            <person name="Xiao Y."/>
            <person name="Bu D."/>
            <person name="Tan J."/>
            <person name="Yang L."/>
            <person name="Ye C."/>
            <person name="Zhang J."/>
            <person name="Xu J."/>
            <person name="Zhou Y."/>
            <person name="Yu Y."/>
            <person name="Zhang B."/>
            <person name="Zhuang S."/>
            <person name="Wei H."/>
            <person name="Liu B."/>
            <person name="Lei M."/>
            <person name="Yu H."/>
            <person name="Li Y."/>
            <person name="Xu H."/>
            <person name="Wei S."/>
            <person name="He X."/>
            <person name="Fang L."/>
            <person name="Zhang Z."/>
            <person name="Zhang Y."/>
            <person name="Huang X."/>
            <person name="Su Z."/>
            <person name="Tong W."/>
            <person name="Li J."/>
            <person name="Tong Z."/>
            <person name="Li S."/>
            <person name="Ye J."/>
            <person name="Wang L."/>
            <person name="Fang L."/>
            <person name="Lei T."/>
            <person name="Chen C.-S."/>
            <person name="Chen H.-C."/>
            <person name="Xu Z."/>
            <person name="Li H."/>
            <person name="Huang H."/>
            <person name="Zhang F."/>
            <person name="Xu H."/>
            <person name="Li N."/>
            <person name="Zhao C."/>
            <person name="Li S."/>
            <person name="Dong L."/>
            <person name="Huang Y."/>
            <person name="Li L."/>
            <person name="Xi Y."/>
            <person name="Qi Q."/>
            <person name="Li W."/>
            <person name="Zhang B."/>
            <person name="Hu W."/>
            <person name="Zhang Y."/>
            <person name="Tian X."/>
            <person name="Jiao Y."/>
            <person name="Liang X."/>
            <person name="Jin J."/>
            <person name="Gao L."/>
            <person name="Zheng W."/>
            <person name="Hao B."/>
            <person name="Liu S.-M."/>
            <person name="Wang W."/>
            <person name="Yuan L."/>
            <person name="Cao M."/>
            <person name="McDermott J."/>
            <person name="Samudrala R."/>
            <person name="Wang J."/>
            <person name="Wong G.K.-S."/>
            <person name="Yang H."/>
        </authorList>
    </citation>
    <scope>NUCLEOTIDE SEQUENCE [LARGE SCALE GENOMIC DNA]</scope>
    <source>
        <strain>cv. 93-11</strain>
    </source>
</reference>
<protein>
    <recommendedName>
        <fullName evidence="3">CMP-sialic acid transporter 3</fullName>
        <shortName evidence="3">CMP-SA-Tr 3</shortName>
        <shortName evidence="3">CMP-Sia-Tr 3</shortName>
    </recommendedName>
    <alternativeName>
        <fullName evidence="3">CMP-sialic acid transporter-like protein 3</fullName>
    </alternativeName>
</protein>
<gene>
    <name evidence="3" type="primary">CSTLP3</name>
    <name evidence="4" type="ORF">OsI_04797</name>
</gene>
<accession>B8A7Q8</accession>
<organism>
    <name type="scientific">Oryza sativa subsp. indica</name>
    <name type="common">Rice</name>
    <dbReference type="NCBI Taxonomy" id="39946"/>
    <lineage>
        <taxon>Eukaryota</taxon>
        <taxon>Viridiplantae</taxon>
        <taxon>Streptophyta</taxon>
        <taxon>Embryophyta</taxon>
        <taxon>Tracheophyta</taxon>
        <taxon>Spermatophyta</taxon>
        <taxon>Magnoliopsida</taxon>
        <taxon>Liliopsida</taxon>
        <taxon>Poales</taxon>
        <taxon>Poaceae</taxon>
        <taxon>BOP clade</taxon>
        <taxon>Oryzoideae</taxon>
        <taxon>Oryzeae</taxon>
        <taxon>Oryzinae</taxon>
        <taxon>Oryza</taxon>
        <taxon>Oryza sativa</taxon>
    </lineage>
</organism>
<evidence type="ECO:0000250" key="1">
    <source>
        <dbReference type="UniProtKB" id="Q654D9"/>
    </source>
</evidence>
<evidence type="ECO:0000255" key="2"/>
<evidence type="ECO:0000305" key="3"/>
<evidence type="ECO:0000312" key="4">
    <source>
        <dbReference type="EMBL" id="EEC71963.1"/>
    </source>
</evidence>
<dbReference type="EMBL" id="CM000126">
    <property type="protein sequence ID" value="EEC71963.1"/>
    <property type="molecule type" value="Genomic_DNA"/>
</dbReference>
<dbReference type="SMR" id="B8A7Q8"/>
<dbReference type="STRING" id="39946.B8A7Q8"/>
<dbReference type="iPTMnet" id="B8A7Q8"/>
<dbReference type="EnsemblPlants" id="BGIOSGA004987-TA">
    <property type="protein sequence ID" value="BGIOSGA004987-PA"/>
    <property type="gene ID" value="BGIOSGA004987"/>
</dbReference>
<dbReference type="EnsemblPlants" id="OsIR64_01g0042230.01">
    <property type="protein sequence ID" value="OsIR64_01g0042230.01"/>
    <property type="gene ID" value="OsIR64_01g0042230"/>
</dbReference>
<dbReference type="EnsemblPlants" id="OsIR64_01g0042230.02">
    <property type="protein sequence ID" value="OsIR64_01g0042230.02"/>
    <property type="gene ID" value="OsIR64_01g0042230"/>
</dbReference>
<dbReference type="EnsemblPlants" id="OsKYG_01g0042500.01">
    <property type="protein sequence ID" value="OsKYG_01g0042500.01"/>
    <property type="gene ID" value="OsKYG_01g0042500"/>
</dbReference>
<dbReference type="EnsemblPlants" id="OsKYG_01g0042500.02">
    <property type="protein sequence ID" value="OsKYG_01g0042500.02"/>
    <property type="gene ID" value="OsKYG_01g0042500"/>
</dbReference>
<dbReference type="EnsemblPlants" id="OsLima_01g0042560.01">
    <property type="protein sequence ID" value="OsLima_01g0042560.01"/>
    <property type="gene ID" value="OsLima_01g0042560"/>
</dbReference>
<dbReference type="EnsemblPlants" id="OsLiXu_01g0042790.01">
    <property type="protein sequence ID" value="OsLiXu_01g0042790.01"/>
    <property type="gene ID" value="OsLiXu_01g0042790"/>
</dbReference>
<dbReference type="EnsemblPlants" id="OsLiXu_01g0042790.02">
    <property type="protein sequence ID" value="OsLiXu_01g0042790.02"/>
    <property type="gene ID" value="OsLiXu_01g0042790"/>
</dbReference>
<dbReference type="EnsemblPlants" id="OsMH63_01G043470_01">
    <property type="protein sequence ID" value="OsMH63_01G043470_01"/>
    <property type="gene ID" value="OsMH63_01G043470"/>
</dbReference>
<dbReference type="EnsemblPlants" id="OsMH63_01G043470_02">
    <property type="protein sequence ID" value="OsMH63_01G043470_02"/>
    <property type="gene ID" value="OsMH63_01G043470"/>
</dbReference>
<dbReference type="EnsemblPlants" id="OsPr106_01g0042590.01">
    <property type="protein sequence ID" value="OsPr106_01g0042590.01"/>
    <property type="gene ID" value="OsPr106_01g0042590"/>
</dbReference>
<dbReference type="EnsemblPlants" id="OsPr106_01g0042590.02">
    <property type="protein sequence ID" value="OsPr106_01g0042590.02"/>
    <property type="gene ID" value="OsPr106_01g0042590"/>
</dbReference>
<dbReference type="EnsemblPlants" id="OsZS97_01G042800_01">
    <property type="protein sequence ID" value="OsZS97_01G042800_01"/>
    <property type="gene ID" value="OsZS97_01G042800"/>
</dbReference>
<dbReference type="EnsemblPlants" id="OsZS97_01G042800_02">
    <property type="protein sequence ID" value="OsZS97_01G042800_02"/>
    <property type="gene ID" value="OsZS97_01G042800"/>
</dbReference>
<dbReference type="Gramene" id="BGIOSGA004987-TA">
    <property type="protein sequence ID" value="BGIOSGA004987-PA"/>
    <property type="gene ID" value="BGIOSGA004987"/>
</dbReference>
<dbReference type="Gramene" id="OsIR64_01g0042230.01">
    <property type="protein sequence ID" value="OsIR64_01g0042230.01"/>
    <property type="gene ID" value="OsIR64_01g0042230"/>
</dbReference>
<dbReference type="Gramene" id="OsIR64_01g0042230.02">
    <property type="protein sequence ID" value="OsIR64_01g0042230.02"/>
    <property type="gene ID" value="OsIR64_01g0042230"/>
</dbReference>
<dbReference type="Gramene" id="OsKYG_01g0042500.01">
    <property type="protein sequence ID" value="OsKYG_01g0042500.01"/>
    <property type="gene ID" value="OsKYG_01g0042500"/>
</dbReference>
<dbReference type="Gramene" id="OsKYG_01g0042500.02">
    <property type="protein sequence ID" value="OsKYG_01g0042500.02"/>
    <property type="gene ID" value="OsKYG_01g0042500"/>
</dbReference>
<dbReference type="Gramene" id="OsLima_01g0042560.01">
    <property type="protein sequence ID" value="OsLima_01g0042560.01"/>
    <property type="gene ID" value="OsLima_01g0042560"/>
</dbReference>
<dbReference type="Gramene" id="OsLiXu_01g0042790.01">
    <property type="protein sequence ID" value="OsLiXu_01g0042790.01"/>
    <property type="gene ID" value="OsLiXu_01g0042790"/>
</dbReference>
<dbReference type="Gramene" id="OsLiXu_01g0042790.02">
    <property type="protein sequence ID" value="OsLiXu_01g0042790.02"/>
    <property type="gene ID" value="OsLiXu_01g0042790"/>
</dbReference>
<dbReference type="Gramene" id="OsMH63_01G043470_01">
    <property type="protein sequence ID" value="OsMH63_01G043470_01"/>
    <property type="gene ID" value="OsMH63_01G043470"/>
</dbReference>
<dbReference type="Gramene" id="OsMH63_01G043470_02">
    <property type="protein sequence ID" value="OsMH63_01G043470_02"/>
    <property type="gene ID" value="OsMH63_01G043470"/>
</dbReference>
<dbReference type="Gramene" id="OsPr106_01g0042590.01">
    <property type="protein sequence ID" value="OsPr106_01g0042590.01"/>
    <property type="gene ID" value="OsPr106_01g0042590"/>
</dbReference>
<dbReference type="Gramene" id="OsPr106_01g0042590.02">
    <property type="protein sequence ID" value="OsPr106_01g0042590.02"/>
    <property type="gene ID" value="OsPr106_01g0042590"/>
</dbReference>
<dbReference type="Gramene" id="OsZS97_01G042800_01">
    <property type="protein sequence ID" value="OsZS97_01G042800_01"/>
    <property type="gene ID" value="OsZS97_01G042800"/>
</dbReference>
<dbReference type="Gramene" id="OsZS97_01G042800_02">
    <property type="protein sequence ID" value="OsZS97_01G042800_02"/>
    <property type="gene ID" value="OsZS97_01G042800"/>
</dbReference>
<dbReference type="HOGENOM" id="CLU_035460_0_0_1"/>
<dbReference type="OMA" id="CLYCREN"/>
<dbReference type="Proteomes" id="UP000007015">
    <property type="component" value="Chromosome 1"/>
</dbReference>
<dbReference type="GO" id="GO:0000139">
    <property type="term" value="C:Golgi membrane"/>
    <property type="evidence" value="ECO:0007669"/>
    <property type="project" value="UniProtKB-SubCell"/>
</dbReference>
<dbReference type="GO" id="GO:0015165">
    <property type="term" value="F:pyrimidine nucleotide-sugar transmembrane transporter activity"/>
    <property type="evidence" value="ECO:0007669"/>
    <property type="project" value="InterPro"/>
</dbReference>
<dbReference type="InterPro" id="IPR007271">
    <property type="entry name" value="Nuc_sug_transpt"/>
</dbReference>
<dbReference type="PANTHER" id="PTHR10231">
    <property type="entry name" value="NUCLEOTIDE-SUGAR TRANSMEMBRANE TRANSPORTER"/>
    <property type="match status" value="1"/>
</dbReference>
<dbReference type="Pfam" id="PF04142">
    <property type="entry name" value="Nuc_sug_transp"/>
    <property type="match status" value="1"/>
</dbReference>
<dbReference type="PIRSF" id="PIRSF005799">
    <property type="entry name" value="UDP-gal_transpt"/>
    <property type="match status" value="1"/>
</dbReference>
<dbReference type="SUPFAM" id="SSF103481">
    <property type="entry name" value="Multidrug resistance efflux transporter EmrE"/>
    <property type="match status" value="1"/>
</dbReference>
<name>CSTR3_ORYSI</name>
<keyword id="KW-0333">Golgi apparatus</keyword>
<keyword id="KW-0472">Membrane</keyword>
<keyword id="KW-1185">Reference proteome</keyword>
<keyword id="KW-0762">Sugar transport</keyword>
<keyword id="KW-0812">Transmembrane</keyword>
<keyword id="KW-1133">Transmembrane helix</keyword>
<keyword id="KW-0813">Transport</keyword>
<proteinExistence type="inferred from homology"/>
<sequence>MSGEVECRVCHAKVQVPMAAAAVSKAYDIHRSSVSSRQRALNVLLVSGDCVLAGLQPILVYMCKVDGKFKFSPVSVNFLTEITKIIFAIIMLCIQARRLKVGEKPFLTVSTFMQAARNNVLLAVPALFYAINNYMKFVMQLYFNPATVKMLGNLKVLVIAVLLKVIMRRRFSTIQWEALALLLIGISVNQLKSLPEGSSTLGLPVAAGAYLYTLFFVTVPALASVYNEKALKSQFDTSIYLQNLFLYGYGAIFNFLGLVITAIIQGPSSFNILEGHSKATMFLICNNAAQGILSSFFFKYADTILKKYSSTIATIFTGVASAVLFGHTLTINFVLAISIVIISMHQYLSNQIKDEVPSSKIEMGDAHEHRSKESVVVNVSDSIATEAKHRHGTDERQPLLPV</sequence>
<feature type="chain" id="PRO_0000434342" description="CMP-sialic acid transporter 3">
    <location>
        <begin position="1"/>
        <end position="402"/>
    </location>
</feature>
<feature type="topological domain" description="Cytoplasmic" evidence="3">
    <location>
        <begin position="1"/>
        <end position="42"/>
    </location>
</feature>
<feature type="transmembrane region" description="Helical" evidence="2">
    <location>
        <begin position="43"/>
        <end position="63"/>
    </location>
</feature>
<feature type="topological domain" description="Lumenal" evidence="3">
    <location>
        <begin position="64"/>
        <end position="73"/>
    </location>
</feature>
<feature type="transmembrane region" description="Helical" evidence="2">
    <location>
        <begin position="74"/>
        <end position="94"/>
    </location>
</feature>
<feature type="topological domain" description="Cytoplasmic" evidence="3">
    <location>
        <begin position="95"/>
        <end position="118"/>
    </location>
</feature>
<feature type="transmembrane region" description="Helical" evidence="2">
    <location>
        <begin position="119"/>
        <end position="139"/>
    </location>
</feature>
<feature type="topological domain" description="Lumenal" evidence="3">
    <location>
        <begin position="140"/>
        <end position="146"/>
    </location>
</feature>
<feature type="transmembrane region" description="Helical" evidence="2">
    <location>
        <begin position="147"/>
        <end position="167"/>
    </location>
</feature>
<feature type="topological domain" description="Cytoplasmic" evidence="3">
    <location>
        <begin position="168"/>
        <end position="170"/>
    </location>
</feature>
<feature type="transmembrane region" description="Helical" evidence="2">
    <location>
        <begin position="171"/>
        <end position="191"/>
    </location>
</feature>
<feature type="topological domain" description="Lumenal" evidence="3">
    <location>
        <begin position="192"/>
        <end position="202"/>
    </location>
</feature>
<feature type="transmembrane region" description="Helical" evidence="2">
    <location>
        <begin position="203"/>
        <end position="223"/>
    </location>
</feature>
<feature type="topological domain" description="Cytoplasmic" evidence="3">
    <location>
        <begin position="224"/>
        <end position="243"/>
    </location>
</feature>
<feature type="transmembrane region" description="Helical" evidence="2">
    <location>
        <begin position="244"/>
        <end position="264"/>
    </location>
</feature>
<feature type="topological domain" description="Lumenal" evidence="3">
    <location>
        <begin position="265"/>
        <end position="280"/>
    </location>
</feature>
<feature type="transmembrane region" description="Helical" evidence="2">
    <location>
        <begin position="281"/>
        <end position="301"/>
    </location>
</feature>
<feature type="topological domain" description="Cytoplasmic" evidence="3">
    <location>
        <begin position="302"/>
        <end position="321"/>
    </location>
</feature>
<feature type="transmembrane region" description="Helical" evidence="2">
    <location>
        <begin position="322"/>
        <end position="342"/>
    </location>
</feature>
<feature type="topological domain" description="Lumenal" evidence="3">
    <location>
        <begin position="343"/>
        <end position="402"/>
    </location>
</feature>
<comment type="function">
    <text evidence="1">Sugar transporter involved in the transport of CMP-sialic acid from the cytoplasm into the Golgi. May transport important nucleotide sugars such as CMP-Kdo (2-keto-3-deoxy-D-manno-octulosonic acid) in physiological conditions.</text>
</comment>
<comment type="subcellular location">
    <subcellularLocation>
        <location evidence="3">Golgi apparatus membrane</location>
        <topology evidence="3">Multi-pass membrane protein</topology>
    </subcellularLocation>
</comment>
<comment type="similarity">
    <text evidence="3">Belongs to the nucleotide-sugar transporter family. CMP-Sialate:CMP antiporter (TC 2.A.7.12) subfamily.</text>
</comment>